<protein>
    <recommendedName>
        <fullName evidence="1">Tryptophan synthase alpha chain</fullName>
        <ecNumber evidence="1">4.2.1.20</ecNumber>
    </recommendedName>
</protein>
<evidence type="ECO:0000255" key="1">
    <source>
        <dbReference type="HAMAP-Rule" id="MF_00131"/>
    </source>
</evidence>
<sequence length="266" mass="27985">MTAISDRFETLKQNQECALIPFITAGDPDLETTAAALKILDSNGADIIELGIPYSDPLADGPVIQAAATRALQNGTKLESVLEMLKVTTPSLQAPIVLFTYYNSILHRGIDNFLEQVAAAGVAGLVVPDLPLEEAAGLLKPATERGIDLILLIAPTSSSERIEAIARSSQGFIYLVSVTGVTGMRSQVEGRVLDLLQKVRQVTDKPLGVGFGISQPAQATQVRDWGADAAIVGSAFVQRLATGTPAEGLSAIAEFCQSLKAAIKTS</sequence>
<organism>
    <name type="scientific">Trichormus variabilis (strain ATCC 29413 / PCC 7937)</name>
    <name type="common">Anabaena variabilis</name>
    <dbReference type="NCBI Taxonomy" id="240292"/>
    <lineage>
        <taxon>Bacteria</taxon>
        <taxon>Bacillati</taxon>
        <taxon>Cyanobacteriota</taxon>
        <taxon>Cyanophyceae</taxon>
        <taxon>Nostocales</taxon>
        <taxon>Nostocaceae</taxon>
        <taxon>Trichormus</taxon>
    </lineage>
</organism>
<name>TRPA_TRIV2</name>
<proteinExistence type="inferred from homology"/>
<keyword id="KW-0028">Amino-acid biosynthesis</keyword>
<keyword id="KW-0057">Aromatic amino acid biosynthesis</keyword>
<keyword id="KW-0456">Lyase</keyword>
<keyword id="KW-0822">Tryptophan biosynthesis</keyword>
<dbReference type="EC" id="4.2.1.20" evidence="1"/>
<dbReference type="EMBL" id="CP000117">
    <property type="protein sequence ID" value="ABA21704.1"/>
    <property type="molecule type" value="Genomic_DNA"/>
</dbReference>
<dbReference type="SMR" id="Q3MBD2"/>
<dbReference type="STRING" id="240292.Ava_2082"/>
<dbReference type="KEGG" id="ava:Ava_2082"/>
<dbReference type="eggNOG" id="COG0159">
    <property type="taxonomic scope" value="Bacteria"/>
</dbReference>
<dbReference type="HOGENOM" id="CLU_016734_0_2_3"/>
<dbReference type="UniPathway" id="UPA00035">
    <property type="reaction ID" value="UER00044"/>
</dbReference>
<dbReference type="Proteomes" id="UP000002533">
    <property type="component" value="Chromosome"/>
</dbReference>
<dbReference type="GO" id="GO:0005829">
    <property type="term" value="C:cytosol"/>
    <property type="evidence" value="ECO:0007669"/>
    <property type="project" value="TreeGrafter"/>
</dbReference>
<dbReference type="GO" id="GO:0004834">
    <property type="term" value="F:tryptophan synthase activity"/>
    <property type="evidence" value="ECO:0007669"/>
    <property type="project" value="UniProtKB-UniRule"/>
</dbReference>
<dbReference type="CDD" id="cd04724">
    <property type="entry name" value="Tryptophan_synthase_alpha"/>
    <property type="match status" value="1"/>
</dbReference>
<dbReference type="FunFam" id="3.20.20.70:FF:000107">
    <property type="entry name" value="Tryptophan synthase alpha chain, chloroplastic"/>
    <property type="match status" value="1"/>
</dbReference>
<dbReference type="Gene3D" id="3.20.20.70">
    <property type="entry name" value="Aldolase class I"/>
    <property type="match status" value="1"/>
</dbReference>
<dbReference type="HAMAP" id="MF_00131">
    <property type="entry name" value="Trp_synth_alpha"/>
    <property type="match status" value="1"/>
</dbReference>
<dbReference type="InterPro" id="IPR013785">
    <property type="entry name" value="Aldolase_TIM"/>
</dbReference>
<dbReference type="InterPro" id="IPR011060">
    <property type="entry name" value="RibuloseP-bd_barrel"/>
</dbReference>
<dbReference type="InterPro" id="IPR018204">
    <property type="entry name" value="Trp_synthase_alpha_AS"/>
</dbReference>
<dbReference type="InterPro" id="IPR002028">
    <property type="entry name" value="Trp_synthase_suA"/>
</dbReference>
<dbReference type="NCBIfam" id="TIGR00262">
    <property type="entry name" value="trpA"/>
    <property type="match status" value="1"/>
</dbReference>
<dbReference type="PANTHER" id="PTHR43406:SF1">
    <property type="entry name" value="TRYPTOPHAN SYNTHASE ALPHA CHAIN, CHLOROPLASTIC"/>
    <property type="match status" value="1"/>
</dbReference>
<dbReference type="PANTHER" id="PTHR43406">
    <property type="entry name" value="TRYPTOPHAN SYNTHASE, ALPHA CHAIN"/>
    <property type="match status" value="1"/>
</dbReference>
<dbReference type="Pfam" id="PF00290">
    <property type="entry name" value="Trp_syntA"/>
    <property type="match status" value="1"/>
</dbReference>
<dbReference type="SUPFAM" id="SSF51366">
    <property type="entry name" value="Ribulose-phoshate binding barrel"/>
    <property type="match status" value="1"/>
</dbReference>
<dbReference type="PROSITE" id="PS00167">
    <property type="entry name" value="TRP_SYNTHASE_ALPHA"/>
    <property type="match status" value="1"/>
</dbReference>
<gene>
    <name evidence="1" type="primary">trpA</name>
    <name type="ordered locus">Ava_2082</name>
</gene>
<feature type="chain" id="PRO_1000018165" description="Tryptophan synthase alpha chain">
    <location>
        <begin position="1"/>
        <end position="266"/>
    </location>
</feature>
<feature type="active site" description="Proton acceptor" evidence="1">
    <location>
        <position position="49"/>
    </location>
</feature>
<feature type="active site" description="Proton acceptor" evidence="1">
    <location>
        <position position="60"/>
    </location>
</feature>
<accession>Q3MBD2</accession>
<comment type="function">
    <text evidence="1">The alpha subunit is responsible for the aldol cleavage of indoleglycerol phosphate to indole and glyceraldehyde 3-phosphate.</text>
</comment>
<comment type="catalytic activity">
    <reaction evidence="1">
        <text>(1S,2R)-1-C-(indol-3-yl)glycerol 3-phosphate + L-serine = D-glyceraldehyde 3-phosphate + L-tryptophan + H2O</text>
        <dbReference type="Rhea" id="RHEA:10532"/>
        <dbReference type="ChEBI" id="CHEBI:15377"/>
        <dbReference type="ChEBI" id="CHEBI:33384"/>
        <dbReference type="ChEBI" id="CHEBI:57912"/>
        <dbReference type="ChEBI" id="CHEBI:58866"/>
        <dbReference type="ChEBI" id="CHEBI:59776"/>
        <dbReference type="EC" id="4.2.1.20"/>
    </reaction>
</comment>
<comment type="pathway">
    <text evidence="1">Amino-acid biosynthesis; L-tryptophan biosynthesis; L-tryptophan from chorismate: step 5/5.</text>
</comment>
<comment type="subunit">
    <text evidence="1">Tetramer of two alpha and two beta chains.</text>
</comment>
<comment type="similarity">
    <text evidence="1">Belongs to the TrpA family.</text>
</comment>
<reference key="1">
    <citation type="journal article" date="2014" name="Stand. Genomic Sci.">
        <title>Complete genome sequence of Anabaena variabilis ATCC 29413.</title>
        <authorList>
            <person name="Thiel T."/>
            <person name="Pratte B.S."/>
            <person name="Zhong J."/>
            <person name="Goodwin L."/>
            <person name="Copeland A."/>
            <person name="Lucas S."/>
            <person name="Han C."/>
            <person name="Pitluck S."/>
            <person name="Land M.L."/>
            <person name="Kyrpides N.C."/>
            <person name="Woyke T."/>
        </authorList>
    </citation>
    <scope>NUCLEOTIDE SEQUENCE [LARGE SCALE GENOMIC DNA]</scope>
    <source>
        <strain>ATCC 29413 / PCC 7937</strain>
    </source>
</reference>